<dbReference type="EC" id="6.3.4.4" evidence="2"/>
<dbReference type="EMBL" id="DS995701">
    <property type="protein sequence ID" value="EEQ27506.1"/>
    <property type="molecule type" value="Genomic_DNA"/>
</dbReference>
<dbReference type="RefSeq" id="XP_002850290.1">
    <property type="nucleotide sequence ID" value="XM_002850244.1"/>
</dbReference>
<dbReference type="SMR" id="C5FC83"/>
<dbReference type="STRING" id="554155.C5FC83"/>
<dbReference type="GeneID" id="9225431"/>
<dbReference type="VEuPathDB" id="FungiDB:MCYG_00394"/>
<dbReference type="eggNOG" id="KOG1355">
    <property type="taxonomic scope" value="Eukaryota"/>
</dbReference>
<dbReference type="HOGENOM" id="CLU_029848_3_2_1"/>
<dbReference type="OMA" id="FHHAKPI"/>
<dbReference type="OrthoDB" id="10265645at2759"/>
<dbReference type="UniPathway" id="UPA00075">
    <property type="reaction ID" value="UER00335"/>
</dbReference>
<dbReference type="Proteomes" id="UP000002035">
    <property type="component" value="Unassembled WGS sequence"/>
</dbReference>
<dbReference type="GO" id="GO:0005737">
    <property type="term" value="C:cytoplasm"/>
    <property type="evidence" value="ECO:0007669"/>
    <property type="project" value="UniProtKB-SubCell"/>
</dbReference>
<dbReference type="GO" id="GO:0004019">
    <property type="term" value="F:adenylosuccinate synthase activity"/>
    <property type="evidence" value="ECO:0007669"/>
    <property type="project" value="UniProtKB-UniRule"/>
</dbReference>
<dbReference type="GO" id="GO:0016208">
    <property type="term" value="F:AMP binding"/>
    <property type="evidence" value="ECO:0007669"/>
    <property type="project" value="EnsemblFungi"/>
</dbReference>
<dbReference type="GO" id="GO:0019002">
    <property type="term" value="F:GMP binding"/>
    <property type="evidence" value="ECO:0007669"/>
    <property type="project" value="EnsemblFungi"/>
</dbReference>
<dbReference type="GO" id="GO:0005525">
    <property type="term" value="F:GTP binding"/>
    <property type="evidence" value="ECO:0007669"/>
    <property type="project" value="UniProtKB-UniRule"/>
</dbReference>
<dbReference type="GO" id="GO:0000287">
    <property type="term" value="F:magnesium ion binding"/>
    <property type="evidence" value="ECO:0007669"/>
    <property type="project" value="UniProtKB-UniRule"/>
</dbReference>
<dbReference type="GO" id="GO:0044208">
    <property type="term" value="P:'de novo' AMP biosynthetic process"/>
    <property type="evidence" value="ECO:0007669"/>
    <property type="project" value="UniProtKB-UniRule"/>
</dbReference>
<dbReference type="GO" id="GO:0071276">
    <property type="term" value="P:cellular response to cadmium ion"/>
    <property type="evidence" value="ECO:0007669"/>
    <property type="project" value="EnsemblFungi"/>
</dbReference>
<dbReference type="GO" id="GO:0046040">
    <property type="term" value="P:IMP metabolic process"/>
    <property type="evidence" value="ECO:0007669"/>
    <property type="project" value="TreeGrafter"/>
</dbReference>
<dbReference type="CDD" id="cd03108">
    <property type="entry name" value="AdSS"/>
    <property type="match status" value="1"/>
</dbReference>
<dbReference type="FunFam" id="1.10.300.10:FF:000001">
    <property type="entry name" value="Adenylosuccinate synthetase"/>
    <property type="match status" value="1"/>
</dbReference>
<dbReference type="FunFam" id="3.90.170.10:FF:000001">
    <property type="entry name" value="Adenylosuccinate synthetase"/>
    <property type="match status" value="1"/>
</dbReference>
<dbReference type="Gene3D" id="3.40.440.10">
    <property type="entry name" value="Adenylosuccinate Synthetase, subunit A, domain 1"/>
    <property type="match status" value="1"/>
</dbReference>
<dbReference type="Gene3D" id="1.10.300.10">
    <property type="entry name" value="Adenylosuccinate Synthetase, subunit A, domain 2"/>
    <property type="match status" value="1"/>
</dbReference>
<dbReference type="Gene3D" id="3.90.170.10">
    <property type="entry name" value="Adenylosuccinate Synthetase, subunit A, domain 3"/>
    <property type="match status" value="1"/>
</dbReference>
<dbReference type="HAMAP" id="MF_00011">
    <property type="entry name" value="Adenylosucc_synth"/>
    <property type="match status" value="1"/>
</dbReference>
<dbReference type="InterPro" id="IPR018220">
    <property type="entry name" value="Adenylosuccin_syn_GTP-bd"/>
</dbReference>
<dbReference type="InterPro" id="IPR033128">
    <property type="entry name" value="Adenylosuccin_syn_Lys_AS"/>
</dbReference>
<dbReference type="InterPro" id="IPR042109">
    <property type="entry name" value="Adenylosuccinate_synth_dom1"/>
</dbReference>
<dbReference type="InterPro" id="IPR042110">
    <property type="entry name" value="Adenylosuccinate_synth_dom2"/>
</dbReference>
<dbReference type="InterPro" id="IPR042111">
    <property type="entry name" value="Adenylosuccinate_synth_dom3"/>
</dbReference>
<dbReference type="InterPro" id="IPR001114">
    <property type="entry name" value="Adenylosuccinate_synthetase"/>
</dbReference>
<dbReference type="InterPro" id="IPR027417">
    <property type="entry name" value="P-loop_NTPase"/>
</dbReference>
<dbReference type="NCBIfam" id="NF002223">
    <property type="entry name" value="PRK01117.1"/>
    <property type="match status" value="1"/>
</dbReference>
<dbReference type="NCBIfam" id="TIGR00184">
    <property type="entry name" value="purA"/>
    <property type="match status" value="1"/>
</dbReference>
<dbReference type="PANTHER" id="PTHR11846">
    <property type="entry name" value="ADENYLOSUCCINATE SYNTHETASE"/>
    <property type="match status" value="1"/>
</dbReference>
<dbReference type="PANTHER" id="PTHR11846:SF0">
    <property type="entry name" value="ADENYLOSUCCINATE SYNTHETASE"/>
    <property type="match status" value="1"/>
</dbReference>
<dbReference type="Pfam" id="PF00709">
    <property type="entry name" value="Adenylsucc_synt"/>
    <property type="match status" value="1"/>
</dbReference>
<dbReference type="SMART" id="SM00788">
    <property type="entry name" value="Adenylsucc_synt"/>
    <property type="match status" value="1"/>
</dbReference>
<dbReference type="SUPFAM" id="SSF52540">
    <property type="entry name" value="P-loop containing nucleoside triphosphate hydrolases"/>
    <property type="match status" value="1"/>
</dbReference>
<dbReference type="PROSITE" id="PS01266">
    <property type="entry name" value="ADENYLOSUCCIN_SYN_1"/>
    <property type="match status" value="1"/>
</dbReference>
<dbReference type="PROSITE" id="PS00513">
    <property type="entry name" value="ADENYLOSUCCIN_SYN_2"/>
    <property type="match status" value="1"/>
</dbReference>
<feature type="chain" id="PRO_0000399344" description="Adenylosuccinate synthetase">
    <location>
        <begin position="1"/>
        <end position="422"/>
    </location>
</feature>
<feature type="active site" description="Proton acceptor" evidence="2">
    <location>
        <position position="12"/>
    </location>
</feature>
<feature type="active site" description="Proton donor" evidence="2">
    <location>
        <position position="40"/>
    </location>
</feature>
<feature type="binding site" evidence="2">
    <location>
        <begin position="11"/>
        <end position="17"/>
    </location>
    <ligand>
        <name>GTP</name>
        <dbReference type="ChEBI" id="CHEBI:37565"/>
    </ligand>
</feature>
<feature type="binding site" description="in other chain" evidence="2">
    <location>
        <begin position="12"/>
        <end position="15"/>
    </location>
    <ligand>
        <name>IMP</name>
        <dbReference type="ChEBI" id="CHEBI:58053"/>
        <note>ligand shared between dimeric partners</note>
    </ligand>
</feature>
<feature type="binding site" evidence="2">
    <location>
        <position position="12"/>
    </location>
    <ligand>
        <name>Mg(2+)</name>
        <dbReference type="ChEBI" id="CHEBI:18420"/>
    </ligand>
</feature>
<feature type="binding site" description="in other chain" evidence="2">
    <location>
        <begin position="37"/>
        <end position="40"/>
    </location>
    <ligand>
        <name>IMP</name>
        <dbReference type="ChEBI" id="CHEBI:58053"/>
        <note>ligand shared between dimeric partners</note>
    </ligand>
</feature>
<feature type="binding site" evidence="2">
    <location>
        <begin position="39"/>
        <end position="41"/>
    </location>
    <ligand>
        <name>GTP</name>
        <dbReference type="ChEBI" id="CHEBI:37565"/>
    </ligand>
</feature>
<feature type="binding site" evidence="2">
    <location>
        <position position="39"/>
    </location>
    <ligand>
        <name>Mg(2+)</name>
        <dbReference type="ChEBI" id="CHEBI:18420"/>
    </ligand>
</feature>
<feature type="binding site" description="in other chain" evidence="2">
    <location>
        <position position="129"/>
    </location>
    <ligand>
        <name>IMP</name>
        <dbReference type="ChEBI" id="CHEBI:58053"/>
        <note>ligand shared between dimeric partners</note>
    </ligand>
</feature>
<feature type="binding site" evidence="2">
    <location>
        <position position="143"/>
    </location>
    <ligand>
        <name>IMP</name>
        <dbReference type="ChEBI" id="CHEBI:58053"/>
        <note>ligand shared between dimeric partners</note>
    </ligand>
</feature>
<feature type="binding site" description="in other chain" evidence="2">
    <location>
        <position position="220"/>
    </location>
    <ligand>
        <name>IMP</name>
        <dbReference type="ChEBI" id="CHEBI:58053"/>
        <note>ligand shared between dimeric partners</note>
    </ligand>
</feature>
<feature type="binding site" description="in other chain" evidence="2">
    <location>
        <position position="235"/>
    </location>
    <ligand>
        <name>IMP</name>
        <dbReference type="ChEBI" id="CHEBI:58053"/>
        <note>ligand shared between dimeric partners</note>
    </ligand>
</feature>
<feature type="binding site" evidence="2">
    <location>
        <begin position="295"/>
        <end position="301"/>
    </location>
    <ligand>
        <name>substrate</name>
    </ligand>
</feature>
<feature type="binding site" description="in other chain" evidence="2">
    <location>
        <position position="299"/>
    </location>
    <ligand>
        <name>IMP</name>
        <dbReference type="ChEBI" id="CHEBI:58053"/>
        <note>ligand shared between dimeric partners</note>
    </ligand>
</feature>
<feature type="binding site" evidence="2">
    <location>
        <position position="301"/>
    </location>
    <ligand>
        <name>GTP</name>
        <dbReference type="ChEBI" id="CHEBI:37565"/>
    </ligand>
</feature>
<feature type="binding site" evidence="2">
    <location>
        <begin position="327"/>
        <end position="329"/>
    </location>
    <ligand>
        <name>GTP</name>
        <dbReference type="ChEBI" id="CHEBI:37565"/>
    </ligand>
</feature>
<feature type="binding site" evidence="2">
    <location>
        <begin position="410"/>
        <end position="412"/>
    </location>
    <ligand>
        <name>GTP</name>
        <dbReference type="ChEBI" id="CHEBI:37565"/>
    </ligand>
</feature>
<comment type="function">
    <text evidence="1">Plays an important role in the de novo pathway and in the salvage pathway of purine nucleotide biosynthesis. Catalyzes the first committed step in the biosynthesis of AMP from IMP (By similarity).</text>
</comment>
<comment type="catalytic activity">
    <reaction evidence="2">
        <text>IMP + L-aspartate + GTP = N(6)-(1,2-dicarboxyethyl)-AMP + GDP + phosphate + 2 H(+)</text>
        <dbReference type="Rhea" id="RHEA:15753"/>
        <dbReference type="ChEBI" id="CHEBI:15378"/>
        <dbReference type="ChEBI" id="CHEBI:29991"/>
        <dbReference type="ChEBI" id="CHEBI:37565"/>
        <dbReference type="ChEBI" id="CHEBI:43474"/>
        <dbReference type="ChEBI" id="CHEBI:57567"/>
        <dbReference type="ChEBI" id="CHEBI:58053"/>
        <dbReference type="ChEBI" id="CHEBI:58189"/>
        <dbReference type="EC" id="6.3.4.4"/>
    </reaction>
</comment>
<comment type="cofactor">
    <cofactor evidence="2">
        <name>Mg(2+)</name>
        <dbReference type="ChEBI" id="CHEBI:18420"/>
    </cofactor>
    <text evidence="2">Binds 1 Mg(2+) ion per subunit.</text>
</comment>
<comment type="pathway">
    <text evidence="2">Purine metabolism; AMP biosynthesis via de novo pathway; AMP from IMP: step 1/2.</text>
</comment>
<comment type="subunit">
    <text evidence="2">Homodimer.</text>
</comment>
<comment type="subcellular location">
    <subcellularLocation>
        <location evidence="2">Cytoplasm</location>
    </subcellularLocation>
</comment>
<comment type="similarity">
    <text evidence="2">Belongs to the adenylosuccinate synthetase family.</text>
</comment>
<organism>
    <name type="scientific">Arthroderma otae (strain ATCC MYA-4605 / CBS 113480)</name>
    <name type="common">Microsporum canis</name>
    <dbReference type="NCBI Taxonomy" id="554155"/>
    <lineage>
        <taxon>Eukaryota</taxon>
        <taxon>Fungi</taxon>
        <taxon>Dikarya</taxon>
        <taxon>Ascomycota</taxon>
        <taxon>Pezizomycotina</taxon>
        <taxon>Eurotiomycetes</taxon>
        <taxon>Eurotiomycetidae</taxon>
        <taxon>Onygenales</taxon>
        <taxon>Arthrodermataceae</taxon>
        <taxon>Microsporum</taxon>
    </lineage>
</organism>
<name>PURA_ARTOC</name>
<protein>
    <recommendedName>
        <fullName evidence="2">Adenylosuccinate synthetase</fullName>
        <shortName evidence="2">AMPSase</shortName>
        <shortName evidence="2">AdSS</shortName>
        <ecNumber evidence="2">6.3.4.4</ecNumber>
    </recommendedName>
    <alternativeName>
        <fullName evidence="2">IMP--aspartate ligase</fullName>
    </alternativeName>
</protein>
<gene>
    <name type="ORF">MCYG_00394</name>
</gene>
<evidence type="ECO:0000250" key="1"/>
<evidence type="ECO:0000255" key="2">
    <source>
        <dbReference type="HAMAP-Rule" id="MF_03125"/>
    </source>
</evidence>
<sequence length="422" mass="46194">MVTIVLGSQWGDEGKGKITDLLSQKAELCCRSAGGHNAGHTIVHDDITYDFHILPSGLVSPTCVNLIGAGTVVHVPSFFKELASLDGKGLKDVRDRVFISDRAQVCFDLHAVVDGLEEAGLGTRKVGTTGKGIGPCYSDKAARRGVRIGDIMDEGVLESKLRSLEAGYRRRFGELDYNVEEEIARFKEYRSLLKPHIVDQLTLVKKFEDESASILVEGANALMLDIDYGTYPFVTSSCTGLGGAVQGVCLNPTSIKSIVGVVKAYCTRVGSGPFPTEQLNEVGEKLQVAGREFGVTTGRKRRCGWLDMVLLRYSARINHYTALNLTKLDILDDFDEIKVAVAYKLDGKELESFPASSDALEKVEIVYETLPGWKSTTMGVSKWEDLPVNAQKYVEYIEHSLGGVPIKWIGTGPARSHMIDRN</sequence>
<reference key="1">
    <citation type="journal article" date="2012" name="MBio">
        <title>Comparative genome analysis of Trichophyton rubrum and related dermatophytes reveals candidate genes involved in infection.</title>
        <authorList>
            <person name="Martinez D.A."/>
            <person name="Oliver B.G."/>
            <person name="Graeser Y."/>
            <person name="Goldberg J.M."/>
            <person name="Li W."/>
            <person name="Martinez-Rossi N.M."/>
            <person name="Monod M."/>
            <person name="Shelest E."/>
            <person name="Barton R.C."/>
            <person name="Birch E."/>
            <person name="Brakhage A.A."/>
            <person name="Chen Z."/>
            <person name="Gurr S.J."/>
            <person name="Heiman D."/>
            <person name="Heitman J."/>
            <person name="Kosti I."/>
            <person name="Rossi A."/>
            <person name="Saif S."/>
            <person name="Samalova M."/>
            <person name="Saunders C.W."/>
            <person name="Shea T."/>
            <person name="Summerbell R.C."/>
            <person name="Xu J."/>
            <person name="Young S."/>
            <person name="Zeng Q."/>
            <person name="Birren B.W."/>
            <person name="Cuomo C.A."/>
            <person name="White T.C."/>
        </authorList>
    </citation>
    <scope>NUCLEOTIDE SEQUENCE [LARGE SCALE GENOMIC DNA]</scope>
    <source>
        <strain>ATCC MYA-4605 / CBS 113480</strain>
    </source>
</reference>
<proteinExistence type="inferred from homology"/>
<accession>C5FC83</accession>
<keyword id="KW-0963">Cytoplasm</keyword>
<keyword id="KW-0342">GTP-binding</keyword>
<keyword id="KW-0436">Ligase</keyword>
<keyword id="KW-0460">Magnesium</keyword>
<keyword id="KW-0479">Metal-binding</keyword>
<keyword id="KW-0547">Nucleotide-binding</keyword>
<keyword id="KW-0658">Purine biosynthesis</keyword>
<keyword id="KW-1185">Reference proteome</keyword>